<dbReference type="EC" id="2.7.1.148" evidence="1"/>
<dbReference type="EMBL" id="CP001150">
    <property type="protein sequence ID" value="ACL99941.1"/>
    <property type="molecule type" value="Genomic_DNA"/>
</dbReference>
<dbReference type="RefSeq" id="WP_012643465.1">
    <property type="nucleotide sequence ID" value="NC_011963.1"/>
</dbReference>
<dbReference type="SMR" id="B9KLF9"/>
<dbReference type="GeneID" id="67445567"/>
<dbReference type="KEGG" id="rsk:RSKD131_0082"/>
<dbReference type="HOGENOM" id="CLU_053057_1_0_5"/>
<dbReference type="UniPathway" id="UPA00056">
    <property type="reaction ID" value="UER00094"/>
</dbReference>
<dbReference type="GO" id="GO:0050515">
    <property type="term" value="F:4-(cytidine 5'-diphospho)-2-C-methyl-D-erythritol kinase activity"/>
    <property type="evidence" value="ECO:0007669"/>
    <property type="project" value="UniProtKB-UniRule"/>
</dbReference>
<dbReference type="GO" id="GO:0005524">
    <property type="term" value="F:ATP binding"/>
    <property type="evidence" value="ECO:0007669"/>
    <property type="project" value="UniProtKB-UniRule"/>
</dbReference>
<dbReference type="GO" id="GO:0019288">
    <property type="term" value="P:isopentenyl diphosphate biosynthetic process, methylerythritol 4-phosphate pathway"/>
    <property type="evidence" value="ECO:0007669"/>
    <property type="project" value="UniProtKB-UniRule"/>
</dbReference>
<dbReference type="GO" id="GO:0016114">
    <property type="term" value="P:terpenoid biosynthetic process"/>
    <property type="evidence" value="ECO:0007669"/>
    <property type="project" value="InterPro"/>
</dbReference>
<dbReference type="Gene3D" id="3.30.230.10">
    <property type="match status" value="1"/>
</dbReference>
<dbReference type="Gene3D" id="3.30.70.890">
    <property type="entry name" value="GHMP kinase, C-terminal domain"/>
    <property type="match status" value="1"/>
</dbReference>
<dbReference type="HAMAP" id="MF_00061">
    <property type="entry name" value="IspE"/>
    <property type="match status" value="1"/>
</dbReference>
<dbReference type="InterPro" id="IPR013750">
    <property type="entry name" value="GHMP_kinase_C_dom"/>
</dbReference>
<dbReference type="InterPro" id="IPR036554">
    <property type="entry name" value="GHMP_kinase_C_sf"/>
</dbReference>
<dbReference type="InterPro" id="IPR006204">
    <property type="entry name" value="GHMP_kinase_N_dom"/>
</dbReference>
<dbReference type="InterPro" id="IPR004424">
    <property type="entry name" value="IspE"/>
</dbReference>
<dbReference type="InterPro" id="IPR020568">
    <property type="entry name" value="Ribosomal_Su5_D2-typ_SF"/>
</dbReference>
<dbReference type="InterPro" id="IPR014721">
    <property type="entry name" value="Ribsml_uS5_D2-typ_fold_subgr"/>
</dbReference>
<dbReference type="NCBIfam" id="TIGR00154">
    <property type="entry name" value="ispE"/>
    <property type="match status" value="1"/>
</dbReference>
<dbReference type="NCBIfam" id="NF011202">
    <property type="entry name" value="PRK14608.1"/>
    <property type="match status" value="1"/>
</dbReference>
<dbReference type="PANTHER" id="PTHR43527">
    <property type="entry name" value="4-DIPHOSPHOCYTIDYL-2-C-METHYL-D-ERYTHRITOL KINASE, CHLOROPLASTIC"/>
    <property type="match status" value="1"/>
</dbReference>
<dbReference type="PANTHER" id="PTHR43527:SF2">
    <property type="entry name" value="4-DIPHOSPHOCYTIDYL-2-C-METHYL-D-ERYTHRITOL KINASE, CHLOROPLASTIC"/>
    <property type="match status" value="1"/>
</dbReference>
<dbReference type="Pfam" id="PF08544">
    <property type="entry name" value="GHMP_kinases_C"/>
    <property type="match status" value="1"/>
</dbReference>
<dbReference type="Pfam" id="PF00288">
    <property type="entry name" value="GHMP_kinases_N"/>
    <property type="match status" value="1"/>
</dbReference>
<dbReference type="PIRSF" id="PIRSF010376">
    <property type="entry name" value="IspE"/>
    <property type="match status" value="1"/>
</dbReference>
<dbReference type="SUPFAM" id="SSF55060">
    <property type="entry name" value="GHMP Kinase, C-terminal domain"/>
    <property type="match status" value="1"/>
</dbReference>
<dbReference type="SUPFAM" id="SSF54211">
    <property type="entry name" value="Ribosomal protein S5 domain 2-like"/>
    <property type="match status" value="1"/>
</dbReference>
<feature type="chain" id="PRO_1000190697" description="4-diphosphocytidyl-2-C-methyl-D-erythritol kinase">
    <location>
        <begin position="1"/>
        <end position="278"/>
    </location>
</feature>
<feature type="active site" evidence="1">
    <location>
        <position position="9"/>
    </location>
</feature>
<feature type="active site" evidence="1">
    <location>
        <position position="128"/>
    </location>
</feature>
<feature type="binding site" evidence="1">
    <location>
        <begin position="89"/>
        <end position="99"/>
    </location>
    <ligand>
        <name>ATP</name>
        <dbReference type="ChEBI" id="CHEBI:30616"/>
    </ligand>
</feature>
<sequence>MTEAFARAKINLTLHVTGQRPDGYHLLDSLVVFADVGDRVRAEPAEALSLAITGPQAANLPVADDNLVLRAARTLGGQGARLTLEKHLPVASGIGGGSADAAAALVALARLWQVPLPDPAAVLKLGADVPVCLEGRAVRMAGVGEILTPLAAPLPEAWLVLANPGVSVPTPPVFKALARRDNPPMPDDLPGWPTVESLAALLATQRNDLEPPAIALAPEIARTRAALAAQPGCLLARMSGSGATCFGLFAAEEAARAAAEAIGTQHPGWWVAPARMVG</sequence>
<reference key="1">
    <citation type="journal article" date="2009" name="J. Bacteriol.">
        <title>Complete genome sequence of Rhodobacter sphaeroides KD131.</title>
        <authorList>
            <person name="Lim S.-K."/>
            <person name="Kim S.J."/>
            <person name="Cha S.H."/>
            <person name="Oh Y.-K."/>
            <person name="Rhee H.-J."/>
            <person name="Kim M.-S."/>
            <person name="Lee J.K."/>
        </authorList>
    </citation>
    <scope>NUCLEOTIDE SEQUENCE [LARGE SCALE GENOMIC DNA]</scope>
    <source>
        <strain>KD131 / KCTC 12085</strain>
    </source>
</reference>
<comment type="function">
    <text evidence="1">Catalyzes the phosphorylation of the position 2 hydroxy group of 4-diphosphocytidyl-2C-methyl-D-erythritol.</text>
</comment>
<comment type="catalytic activity">
    <reaction evidence="1">
        <text>4-CDP-2-C-methyl-D-erythritol + ATP = 4-CDP-2-C-methyl-D-erythritol 2-phosphate + ADP + H(+)</text>
        <dbReference type="Rhea" id="RHEA:18437"/>
        <dbReference type="ChEBI" id="CHEBI:15378"/>
        <dbReference type="ChEBI" id="CHEBI:30616"/>
        <dbReference type="ChEBI" id="CHEBI:57823"/>
        <dbReference type="ChEBI" id="CHEBI:57919"/>
        <dbReference type="ChEBI" id="CHEBI:456216"/>
        <dbReference type="EC" id="2.7.1.148"/>
    </reaction>
</comment>
<comment type="pathway">
    <text evidence="1">Isoprenoid biosynthesis; isopentenyl diphosphate biosynthesis via DXP pathway; isopentenyl diphosphate from 1-deoxy-D-xylulose 5-phosphate: step 3/6.</text>
</comment>
<comment type="similarity">
    <text evidence="1">Belongs to the GHMP kinase family. IspE subfamily.</text>
</comment>
<evidence type="ECO:0000255" key="1">
    <source>
        <dbReference type="HAMAP-Rule" id="MF_00061"/>
    </source>
</evidence>
<keyword id="KW-0067">ATP-binding</keyword>
<keyword id="KW-0414">Isoprene biosynthesis</keyword>
<keyword id="KW-0418">Kinase</keyword>
<keyword id="KW-0547">Nucleotide-binding</keyword>
<keyword id="KW-0808">Transferase</keyword>
<proteinExistence type="inferred from homology"/>
<accession>B9KLF9</accession>
<name>ISPE_CERSK</name>
<protein>
    <recommendedName>
        <fullName evidence="1">4-diphosphocytidyl-2-C-methyl-D-erythritol kinase</fullName>
        <shortName evidence="1">CMK</shortName>
        <ecNumber evidence="1">2.7.1.148</ecNumber>
    </recommendedName>
    <alternativeName>
        <fullName evidence="1">4-(cytidine-5'-diphospho)-2-C-methyl-D-erythritol kinase</fullName>
    </alternativeName>
</protein>
<organism>
    <name type="scientific">Cereibacter sphaeroides (strain KD131 / KCTC 12085)</name>
    <name type="common">Rhodobacter sphaeroides</name>
    <dbReference type="NCBI Taxonomy" id="557760"/>
    <lineage>
        <taxon>Bacteria</taxon>
        <taxon>Pseudomonadati</taxon>
        <taxon>Pseudomonadota</taxon>
        <taxon>Alphaproteobacteria</taxon>
        <taxon>Rhodobacterales</taxon>
        <taxon>Paracoccaceae</taxon>
        <taxon>Cereibacter</taxon>
    </lineage>
</organism>
<gene>
    <name evidence="1" type="primary">ispE</name>
    <name type="ordered locus">RSKD131_0082</name>
</gene>